<sequence>MDYRRLKDLPEELLPRERLFQYGADALSNREILAILLRTGVKGENVLDFSERLLTETGGLSGLARLTVHELTRYRGMGTAKAAELKAALELGRRSVSSDPLVRPVINSPQDIAHLVMEEMRYLDREHFRVVSLSTKNHVLGISSISVGSLNSSLVHPRECFKEAIRRNSNAIILLHNHPSGDPTPSSEDIDVTRRLSDGGQILGIEVLDHVIIGDNRYISLKERGIL</sequence>
<protein>
    <recommendedName>
        <fullName>UPF0758 protein Dhaf_4352</fullName>
    </recommendedName>
</protein>
<feature type="chain" id="PRO_1000195293" description="UPF0758 protein Dhaf_4352">
    <location>
        <begin position="1"/>
        <end position="227"/>
    </location>
</feature>
<feature type="domain" description="MPN" evidence="1">
    <location>
        <begin position="105"/>
        <end position="227"/>
    </location>
</feature>
<feature type="short sequence motif" description="JAMM motif" evidence="1">
    <location>
        <begin position="176"/>
        <end position="189"/>
    </location>
</feature>
<feature type="binding site" evidence="1">
    <location>
        <position position="176"/>
    </location>
    <ligand>
        <name>Zn(2+)</name>
        <dbReference type="ChEBI" id="CHEBI:29105"/>
        <note>catalytic</note>
    </ligand>
</feature>
<feature type="binding site" evidence="1">
    <location>
        <position position="178"/>
    </location>
    <ligand>
        <name>Zn(2+)</name>
        <dbReference type="ChEBI" id="CHEBI:29105"/>
        <note>catalytic</note>
    </ligand>
</feature>
<feature type="binding site" evidence="1">
    <location>
        <position position="189"/>
    </location>
    <ligand>
        <name>Zn(2+)</name>
        <dbReference type="ChEBI" id="CHEBI:29105"/>
        <note>catalytic</note>
    </ligand>
</feature>
<accession>B8FVF5</accession>
<reference key="1">
    <citation type="journal article" date="2012" name="BMC Microbiol.">
        <title>Genome sequence of Desulfitobacterium hafniense DCB-2, a Gram-positive anaerobe capable of dehalogenation and metal reduction.</title>
        <authorList>
            <person name="Kim S.H."/>
            <person name="Harzman C."/>
            <person name="Davis J.K."/>
            <person name="Hutcheson R."/>
            <person name="Broderick J.B."/>
            <person name="Marsh T.L."/>
            <person name="Tiedje J.M."/>
        </authorList>
    </citation>
    <scope>NUCLEOTIDE SEQUENCE [LARGE SCALE GENOMIC DNA]</scope>
    <source>
        <strain>DSM 10664 / DCB-2</strain>
    </source>
</reference>
<proteinExistence type="inferred from homology"/>
<dbReference type="EMBL" id="CP001336">
    <property type="protein sequence ID" value="ACL22357.1"/>
    <property type="molecule type" value="Genomic_DNA"/>
</dbReference>
<dbReference type="SMR" id="B8FVF5"/>
<dbReference type="KEGG" id="dhd:Dhaf_4352"/>
<dbReference type="HOGENOM" id="CLU_073529_0_2_9"/>
<dbReference type="Proteomes" id="UP000007726">
    <property type="component" value="Chromosome"/>
</dbReference>
<dbReference type="GO" id="GO:0046872">
    <property type="term" value="F:metal ion binding"/>
    <property type="evidence" value="ECO:0007669"/>
    <property type="project" value="UniProtKB-KW"/>
</dbReference>
<dbReference type="GO" id="GO:0008237">
    <property type="term" value="F:metallopeptidase activity"/>
    <property type="evidence" value="ECO:0007669"/>
    <property type="project" value="UniProtKB-KW"/>
</dbReference>
<dbReference type="GO" id="GO:0006508">
    <property type="term" value="P:proteolysis"/>
    <property type="evidence" value="ECO:0007669"/>
    <property type="project" value="UniProtKB-KW"/>
</dbReference>
<dbReference type="CDD" id="cd08071">
    <property type="entry name" value="MPN_DUF2466"/>
    <property type="match status" value="1"/>
</dbReference>
<dbReference type="Gene3D" id="3.40.140.10">
    <property type="entry name" value="Cytidine Deaminase, domain 2"/>
    <property type="match status" value="1"/>
</dbReference>
<dbReference type="InterPro" id="IPR037518">
    <property type="entry name" value="MPN"/>
</dbReference>
<dbReference type="InterPro" id="IPR025657">
    <property type="entry name" value="RadC_JAB"/>
</dbReference>
<dbReference type="InterPro" id="IPR010994">
    <property type="entry name" value="RuvA_2-like"/>
</dbReference>
<dbReference type="InterPro" id="IPR001405">
    <property type="entry name" value="UPF0758"/>
</dbReference>
<dbReference type="InterPro" id="IPR020891">
    <property type="entry name" value="UPF0758_CS"/>
</dbReference>
<dbReference type="InterPro" id="IPR046778">
    <property type="entry name" value="UPF0758_N"/>
</dbReference>
<dbReference type="NCBIfam" id="NF000642">
    <property type="entry name" value="PRK00024.1"/>
    <property type="match status" value="1"/>
</dbReference>
<dbReference type="NCBIfam" id="TIGR00608">
    <property type="entry name" value="radc"/>
    <property type="match status" value="1"/>
</dbReference>
<dbReference type="PANTHER" id="PTHR30471">
    <property type="entry name" value="DNA REPAIR PROTEIN RADC"/>
    <property type="match status" value="1"/>
</dbReference>
<dbReference type="PANTHER" id="PTHR30471:SF3">
    <property type="entry name" value="UPF0758 PROTEIN YEES-RELATED"/>
    <property type="match status" value="1"/>
</dbReference>
<dbReference type="Pfam" id="PF04002">
    <property type="entry name" value="RadC"/>
    <property type="match status" value="1"/>
</dbReference>
<dbReference type="Pfam" id="PF20582">
    <property type="entry name" value="UPF0758_N"/>
    <property type="match status" value="1"/>
</dbReference>
<dbReference type="SUPFAM" id="SSF102712">
    <property type="entry name" value="JAB1/MPN domain"/>
    <property type="match status" value="1"/>
</dbReference>
<dbReference type="SUPFAM" id="SSF47781">
    <property type="entry name" value="RuvA domain 2-like"/>
    <property type="match status" value="1"/>
</dbReference>
<dbReference type="PROSITE" id="PS50249">
    <property type="entry name" value="MPN"/>
    <property type="match status" value="1"/>
</dbReference>
<dbReference type="PROSITE" id="PS01302">
    <property type="entry name" value="UPF0758"/>
    <property type="match status" value="1"/>
</dbReference>
<gene>
    <name type="ordered locus">Dhaf_4352</name>
</gene>
<name>Y4352_DESHD</name>
<organism>
    <name type="scientific">Desulfitobacterium hafniense (strain DSM 10664 / DCB-2)</name>
    <dbReference type="NCBI Taxonomy" id="272564"/>
    <lineage>
        <taxon>Bacteria</taxon>
        <taxon>Bacillati</taxon>
        <taxon>Bacillota</taxon>
        <taxon>Clostridia</taxon>
        <taxon>Eubacteriales</taxon>
        <taxon>Desulfitobacteriaceae</taxon>
        <taxon>Desulfitobacterium</taxon>
    </lineage>
</organism>
<keyword id="KW-0378">Hydrolase</keyword>
<keyword id="KW-0479">Metal-binding</keyword>
<keyword id="KW-0482">Metalloprotease</keyword>
<keyword id="KW-0645">Protease</keyword>
<keyword id="KW-0862">Zinc</keyword>
<comment type="similarity">
    <text evidence="2">Belongs to the UPF0758 family.</text>
</comment>
<evidence type="ECO:0000255" key="1">
    <source>
        <dbReference type="PROSITE-ProRule" id="PRU01182"/>
    </source>
</evidence>
<evidence type="ECO:0000305" key="2"/>